<protein>
    <recommendedName>
        <fullName evidence="1">Malate dehydrogenase</fullName>
        <ecNumber evidence="1">1.1.1.37</ecNumber>
    </recommendedName>
</protein>
<gene>
    <name evidence="1" type="primary">mdh</name>
    <name type="ordered locus">BMA10229_1826</name>
</gene>
<accession>A2S105</accession>
<accession>A2S104</accession>
<organism>
    <name type="scientific">Burkholderia mallei (strain NCTC 10229)</name>
    <dbReference type="NCBI Taxonomy" id="412022"/>
    <lineage>
        <taxon>Bacteria</taxon>
        <taxon>Pseudomonadati</taxon>
        <taxon>Pseudomonadota</taxon>
        <taxon>Betaproteobacteria</taxon>
        <taxon>Burkholderiales</taxon>
        <taxon>Burkholderiaceae</taxon>
        <taxon>Burkholderia</taxon>
        <taxon>pseudomallei group</taxon>
    </lineage>
</organism>
<comment type="function">
    <text evidence="1">Catalyzes the reversible oxidation of malate to oxaloacetate.</text>
</comment>
<comment type="catalytic activity">
    <reaction evidence="1">
        <text>(S)-malate + NAD(+) = oxaloacetate + NADH + H(+)</text>
        <dbReference type="Rhea" id="RHEA:21432"/>
        <dbReference type="ChEBI" id="CHEBI:15378"/>
        <dbReference type="ChEBI" id="CHEBI:15589"/>
        <dbReference type="ChEBI" id="CHEBI:16452"/>
        <dbReference type="ChEBI" id="CHEBI:57540"/>
        <dbReference type="ChEBI" id="CHEBI:57945"/>
        <dbReference type="EC" id="1.1.1.37"/>
    </reaction>
</comment>
<comment type="similarity">
    <text evidence="1">Belongs to the LDH/MDH superfamily. MDH type 2 family.</text>
</comment>
<reference key="1">
    <citation type="journal article" date="2010" name="Genome Biol. Evol.">
        <title>Continuing evolution of Burkholderia mallei through genome reduction and large-scale rearrangements.</title>
        <authorList>
            <person name="Losada L."/>
            <person name="Ronning C.M."/>
            <person name="DeShazer D."/>
            <person name="Woods D."/>
            <person name="Fedorova N."/>
            <person name="Kim H.S."/>
            <person name="Shabalina S.A."/>
            <person name="Pearson T.R."/>
            <person name="Brinkac L."/>
            <person name="Tan P."/>
            <person name="Nandi T."/>
            <person name="Crabtree J."/>
            <person name="Badger J."/>
            <person name="Beckstrom-Sternberg S."/>
            <person name="Saqib M."/>
            <person name="Schutzer S.E."/>
            <person name="Keim P."/>
            <person name="Nierman W.C."/>
        </authorList>
    </citation>
    <scope>NUCLEOTIDE SEQUENCE [LARGE SCALE GENOMIC DNA]</scope>
    <source>
        <strain>NCTC 10229</strain>
    </source>
</reference>
<reference key="2">
    <citation type="submission" date="2009-10" db="EMBL/GenBank/DDBJ databases">
        <authorList>
            <person name="Brinkac L.M."/>
            <person name="Harkins D.M."/>
            <person name="Shrivastava S."/>
            <person name="Durkin A.S."/>
            <person name="Sutton G."/>
        </authorList>
    </citation>
    <scope>SEQUENCE REVISION</scope>
</reference>
<keyword id="KW-0520">NAD</keyword>
<keyword id="KW-0560">Oxidoreductase</keyword>
<keyword id="KW-0816">Tricarboxylic acid cycle</keyword>
<evidence type="ECO:0000255" key="1">
    <source>
        <dbReference type="HAMAP-Rule" id="MF_01517"/>
    </source>
</evidence>
<dbReference type="EC" id="1.1.1.37" evidence="1"/>
<dbReference type="EMBL" id="CP000545">
    <property type="protein sequence ID" value="ABM99953.2"/>
    <property type="molecule type" value="Genomic_DNA"/>
</dbReference>
<dbReference type="RefSeq" id="WP_004187735.1">
    <property type="nucleotide sequence ID" value="NC_008835.1"/>
</dbReference>
<dbReference type="SMR" id="A2S105"/>
<dbReference type="KEGG" id="bml:BMA10229_1826"/>
<dbReference type="HOGENOM" id="CLU_040727_2_0_4"/>
<dbReference type="Proteomes" id="UP000002283">
    <property type="component" value="Chromosome II"/>
</dbReference>
<dbReference type="GO" id="GO:0030060">
    <property type="term" value="F:L-malate dehydrogenase (NAD+) activity"/>
    <property type="evidence" value="ECO:0007669"/>
    <property type="project" value="UniProtKB-UniRule"/>
</dbReference>
<dbReference type="GO" id="GO:0006108">
    <property type="term" value="P:malate metabolic process"/>
    <property type="evidence" value="ECO:0007669"/>
    <property type="project" value="InterPro"/>
</dbReference>
<dbReference type="GO" id="GO:0006099">
    <property type="term" value="P:tricarboxylic acid cycle"/>
    <property type="evidence" value="ECO:0007669"/>
    <property type="project" value="UniProtKB-UniRule"/>
</dbReference>
<dbReference type="CDD" id="cd01338">
    <property type="entry name" value="MDH_chloroplast-like"/>
    <property type="match status" value="1"/>
</dbReference>
<dbReference type="FunFam" id="3.40.50.720:FF:000010">
    <property type="entry name" value="Malate dehydrogenase"/>
    <property type="match status" value="1"/>
</dbReference>
<dbReference type="FunFam" id="3.90.110.10:FF:000002">
    <property type="entry name" value="Malate dehydrogenase"/>
    <property type="match status" value="1"/>
</dbReference>
<dbReference type="Gene3D" id="3.90.110.10">
    <property type="entry name" value="Lactate dehydrogenase/glycoside hydrolase, family 4, C-terminal"/>
    <property type="match status" value="1"/>
</dbReference>
<dbReference type="Gene3D" id="3.40.50.720">
    <property type="entry name" value="NAD(P)-binding Rossmann-like Domain"/>
    <property type="match status" value="1"/>
</dbReference>
<dbReference type="HAMAP" id="MF_01517">
    <property type="entry name" value="Malate_dehydrog_2"/>
    <property type="match status" value="1"/>
</dbReference>
<dbReference type="InterPro" id="IPR001557">
    <property type="entry name" value="L-lactate/malate_DH"/>
</dbReference>
<dbReference type="InterPro" id="IPR022383">
    <property type="entry name" value="Lactate/malate_DH_C"/>
</dbReference>
<dbReference type="InterPro" id="IPR001236">
    <property type="entry name" value="Lactate/malate_DH_N"/>
</dbReference>
<dbReference type="InterPro" id="IPR015955">
    <property type="entry name" value="Lactate_DH/Glyco_Ohase_4_C"/>
</dbReference>
<dbReference type="InterPro" id="IPR010945">
    <property type="entry name" value="Malate_DH_type2"/>
</dbReference>
<dbReference type="InterPro" id="IPR036291">
    <property type="entry name" value="NAD(P)-bd_dom_sf"/>
</dbReference>
<dbReference type="NCBIfam" id="TIGR01759">
    <property type="entry name" value="MalateDH-SF1"/>
    <property type="match status" value="1"/>
</dbReference>
<dbReference type="NCBIfam" id="NF003916">
    <property type="entry name" value="PRK05442.1"/>
    <property type="match status" value="1"/>
</dbReference>
<dbReference type="PANTHER" id="PTHR23382">
    <property type="entry name" value="MALATE DEHYDROGENASE"/>
    <property type="match status" value="1"/>
</dbReference>
<dbReference type="Pfam" id="PF02866">
    <property type="entry name" value="Ldh_1_C"/>
    <property type="match status" value="1"/>
</dbReference>
<dbReference type="Pfam" id="PF00056">
    <property type="entry name" value="Ldh_1_N"/>
    <property type="match status" value="1"/>
</dbReference>
<dbReference type="PIRSF" id="PIRSF000102">
    <property type="entry name" value="Lac_mal_DH"/>
    <property type="match status" value="1"/>
</dbReference>
<dbReference type="SUPFAM" id="SSF56327">
    <property type="entry name" value="LDH C-terminal domain-like"/>
    <property type="match status" value="1"/>
</dbReference>
<dbReference type="SUPFAM" id="SSF51735">
    <property type="entry name" value="NAD(P)-binding Rossmann-fold domains"/>
    <property type="match status" value="1"/>
</dbReference>
<feature type="chain" id="PRO_1000068600" description="Malate dehydrogenase">
    <location>
        <begin position="1"/>
        <end position="327"/>
    </location>
</feature>
<feature type="active site" description="Proton acceptor" evidence="1">
    <location>
        <position position="188"/>
    </location>
</feature>
<feature type="binding site" evidence="1">
    <location>
        <begin position="12"/>
        <end position="18"/>
    </location>
    <ligand>
        <name>NAD(+)</name>
        <dbReference type="ChEBI" id="CHEBI:57540"/>
    </ligand>
</feature>
<feature type="binding site" evidence="1">
    <location>
        <position position="93"/>
    </location>
    <ligand>
        <name>substrate</name>
    </ligand>
</feature>
<feature type="binding site" evidence="1">
    <location>
        <position position="99"/>
    </location>
    <ligand>
        <name>substrate</name>
    </ligand>
</feature>
<feature type="binding site" evidence="1">
    <location>
        <position position="106"/>
    </location>
    <ligand>
        <name>NAD(+)</name>
        <dbReference type="ChEBI" id="CHEBI:57540"/>
    </ligand>
</feature>
<feature type="binding site" evidence="1">
    <location>
        <position position="113"/>
    </location>
    <ligand>
        <name>NAD(+)</name>
        <dbReference type="ChEBI" id="CHEBI:57540"/>
    </ligand>
</feature>
<feature type="binding site" evidence="1">
    <location>
        <begin position="130"/>
        <end position="132"/>
    </location>
    <ligand>
        <name>NAD(+)</name>
        <dbReference type="ChEBI" id="CHEBI:57540"/>
    </ligand>
</feature>
<feature type="binding site" evidence="1">
    <location>
        <position position="132"/>
    </location>
    <ligand>
        <name>substrate</name>
    </ligand>
</feature>
<feature type="binding site" evidence="1">
    <location>
        <position position="163"/>
    </location>
    <ligand>
        <name>substrate</name>
    </ligand>
</feature>
<sequence>MAKPAKRVAVTGAAGQIAYSLLFRIANGDLLGKDQPVILQLLDLPQAQAAVKGVVMELDDCAFPLLAGVVITDDPKVAFKDADVALLVGARPRSKGMERKDLLSANAEIFTVQGAALNEVASRDVKVLVVGNPANTNAYIAMKSAPDLPKKNFTAMLRLDHNRALSQLAAKSGKPVASIEKLAVWGNHSPTMYPDFRFATAEGESLLKLINDDVWNRDTFIPTVGKRGAAIIEARGLSSAASAANAAIDHVRDWVLGTNGKWVTMGIPSDGSYGIPEDIIYGVPVICENGEYKRVEGLEIDAFSREKMDGTLAELLEERDGVAHLLK</sequence>
<proteinExistence type="inferred from homology"/>
<name>MDH_BURM9</name>